<evidence type="ECO:0000255" key="1">
    <source>
        <dbReference type="PROSITE-ProRule" id="PRU00407"/>
    </source>
</evidence>
<evidence type="ECO:0000255" key="2">
    <source>
        <dbReference type="PROSITE-ProRule" id="PRU01189"/>
    </source>
</evidence>
<evidence type="ECO:0000305" key="3"/>
<evidence type="ECO:0000312" key="4">
    <source>
        <dbReference type="WormBase" id="T27B7.1a"/>
    </source>
</evidence>
<gene>
    <name evidence="4" type="primary">nhr-59</name>
    <name evidence="4" type="ORF">T27B7.1</name>
</gene>
<comment type="function">
    <text>Orphan nuclear receptor.</text>
</comment>
<comment type="subcellular location">
    <subcellularLocation>
        <location evidence="1">Nucleus</location>
    </subcellularLocation>
</comment>
<comment type="similarity">
    <text evidence="3">Belongs to the nuclear hormone receptor family.</text>
</comment>
<dbReference type="EMBL" id="AF273807">
    <property type="protein sequence ID" value="AAG15156.1"/>
    <property type="molecule type" value="mRNA"/>
</dbReference>
<dbReference type="EMBL" id="FO081753">
    <property type="protein sequence ID" value="CCD74242.1"/>
    <property type="molecule type" value="Genomic_DNA"/>
</dbReference>
<dbReference type="RefSeq" id="NP_503624.2">
    <property type="nucleotide sequence ID" value="NM_071223.5"/>
</dbReference>
<dbReference type="SMR" id="Q9TXJ1"/>
<dbReference type="PaxDb" id="6239-T27B7.1"/>
<dbReference type="EnsemblMetazoa" id="T27B7.1a.1">
    <property type="protein sequence ID" value="T27B7.1a.1"/>
    <property type="gene ID" value="WBGene00003649"/>
</dbReference>
<dbReference type="GeneID" id="178707"/>
<dbReference type="KEGG" id="cel:CELE_T27B7.1"/>
<dbReference type="UCSC" id="T27B7.1">
    <property type="organism name" value="c. elegans"/>
</dbReference>
<dbReference type="AGR" id="WB:WBGene00003649"/>
<dbReference type="CTD" id="178707"/>
<dbReference type="WormBase" id="T27B7.1a">
    <property type="protein sequence ID" value="CE30194"/>
    <property type="gene ID" value="WBGene00003649"/>
    <property type="gene designation" value="nhr-59"/>
</dbReference>
<dbReference type="eggNOG" id="KOG3575">
    <property type="taxonomic scope" value="Eukaryota"/>
</dbReference>
<dbReference type="GeneTree" id="ENSGT00940000164378"/>
<dbReference type="HOGENOM" id="CLU_007368_7_1_1"/>
<dbReference type="InParanoid" id="Q9TXJ1"/>
<dbReference type="OMA" id="IILARNC"/>
<dbReference type="OrthoDB" id="5848321at2759"/>
<dbReference type="PhylomeDB" id="Q9TXJ1"/>
<dbReference type="PRO" id="PR:Q9TXJ1"/>
<dbReference type="Proteomes" id="UP000001940">
    <property type="component" value="Chromosome V"/>
</dbReference>
<dbReference type="Bgee" id="WBGene00003649">
    <property type="expression patterns" value="Expressed in pharyngeal muscle cell (C elegans) and 3 other cell types or tissues"/>
</dbReference>
<dbReference type="ExpressionAtlas" id="Q9TXJ1">
    <property type="expression patterns" value="baseline and differential"/>
</dbReference>
<dbReference type="GO" id="GO:0005634">
    <property type="term" value="C:nucleus"/>
    <property type="evidence" value="ECO:0007669"/>
    <property type="project" value="UniProtKB-SubCell"/>
</dbReference>
<dbReference type="GO" id="GO:0003700">
    <property type="term" value="F:DNA-binding transcription factor activity"/>
    <property type="evidence" value="ECO:0007669"/>
    <property type="project" value="InterPro"/>
</dbReference>
<dbReference type="GO" id="GO:0043565">
    <property type="term" value="F:sequence-specific DNA binding"/>
    <property type="evidence" value="ECO:0007669"/>
    <property type="project" value="InterPro"/>
</dbReference>
<dbReference type="GO" id="GO:0008270">
    <property type="term" value="F:zinc ion binding"/>
    <property type="evidence" value="ECO:0007669"/>
    <property type="project" value="UniProtKB-KW"/>
</dbReference>
<dbReference type="Gene3D" id="3.30.50.10">
    <property type="entry name" value="Erythroid Transcription Factor GATA-1, subunit A"/>
    <property type="match status" value="1"/>
</dbReference>
<dbReference type="Gene3D" id="1.10.565.10">
    <property type="entry name" value="Retinoid X Receptor"/>
    <property type="match status" value="1"/>
</dbReference>
<dbReference type="InterPro" id="IPR051152">
    <property type="entry name" value="C.elegans_Orphan_NR"/>
</dbReference>
<dbReference type="InterPro" id="IPR035500">
    <property type="entry name" value="NHR-like_dom_sf"/>
</dbReference>
<dbReference type="InterPro" id="IPR000536">
    <property type="entry name" value="Nucl_hrmn_rcpt_lig-bd"/>
</dbReference>
<dbReference type="InterPro" id="IPR001628">
    <property type="entry name" value="Znf_hrmn_rcpt"/>
</dbReference>
<dbReference type="InterPro" id="IPR013088">
    <property type="entry name" value="Znf_NHR/GATA"/>
</dbReference>
<dbReference type="PANTHER" id="PTHR45680">
    <property type="entry name" value="NUCLEAR HORMONE RECEPTOR FAMILY"/>
    <property type="match status" value="1"/>
</dbReference>
<dbReference type="PANTHER" id="PTHR45680:SF2">
    <property type="entry name" value="NUCLEAR HORMONE RECEPTOR FAMILY-RELATED"/>
    <property type="match status" value="1"/>
</dbReference>
<dbReference type="Pfam" id="PF00104">
    <property type="entry name" value="Hormone_recep"/>
    <property type="match status" value="1"/>
</dbReference>
<dbReference type="Pfam" id="PF00105">
    <property type="entry name" value="zf-C4"/>
    <property type="match status" value="1"/>
</dbReference>
<dbReference type="PRINTS" id="PR00047">
    <property type="entry name" value="STROIDFINGER"/>
</dbReference>
<dbReference type="SMART" id="SM00430">
    <property type="entry name" value="HOLI"/>
    <property type="match status" value="1"/>
</dbReference>
<dbReference type="SMART" id="SM00399">
    <property type="entry name" value="ZnF_C4"/>
    <property type="match status" value="1"/>
</dbReference>
<dbReference type="SUPFAM" id="SSF57716">
    <property type="entry name" value="Glucocorticoid receptor-like (DNA-binding domain)"/>
    <property type="match status" value="1"/>
</dbReference>
<dbReference type="SUPFAM" id="SSF48508">
    <property type="entry name" value="Nuclear receptor ligand-binding domain"/>
    <property type="match status" value="1"/>
</dbReference>
<dbReference type="PROSITE" id="PS51843">
    <property type="entry name" value="NR_LBD"/>
    <property type="match status" value="1"/>
</dbReference>
<dbReference type="PROSITE" id="PS00031">
    <property type="entry name" value="NUCLEAR_REC_DBD_1"/>
    <property type="match status" value="1"/>
</dbReference>
<dbReference type="PROSITE" id="PS51030">
    <property type="entry name" value="NUCLEAR_REC_DBD_2"/>
    <property type="match status" value="1"/>
</dbReference>
<proteinExistence type="evidence at transcript level"/>
<reference key="1">
    <citation type="journal article" date="2005" name="J. Mol. Evol.">
        <title>Explosive lineage-specific expansion of the orphan nuclear receptor HNF4 in nematodes.</title>
        <authorList>
            <person name="Robinson-Rechavi M."/>
            <person name="Maina C.V."/>
            <person name="Gissendanner C.R."/>
            <person name="Laudet V."/>
            <person name="Sluder A."/>
        </authorList>
    </citation>
    <scope>NUCLEOTIDE SEQUENCE [MRNA]</scope>
</reference>
<reference key="2">
    <citation type="journal article" date="1998" name="Science">
        <title>Genome sequence of the nematode C. elegans: a platform for investigating biology.</title>
        <authorList>
            <consortium name="The C. elegans sequencing consortium"/>
        </authorList>
    </citation>
    <scope>NUCLEOTIDE SEQUENCE [LARGE SCALE GENOMIC DNA]</scope>
    <source>
        <strain>Bristol N2</strain>
    </source>
</reference>
<sequence>MHPDSSRKLALKAVVNQTFCQVCGQESHGAHFGAITCRACAAFFRRVAAGANFEVKCKDGRGRCKILTNGRSCCKKCRLKKCKDIGMDIQNFQFNRDSFATSTKVAPSLSTFLGRPEFLLSCSPGTSASTSQNKFIDLSPFIKNCKQVLMDDRKIPLAPGKTRLQKLSSSLDFEISANNKKKKTDLRKVSTLGFSEAIQIFENELLMTSKWLAHFEEFHDLGNDFKFKFLECTWNIWNRLERVARTAALLRDQKISNGKGNEIILARNCVIDLRTVKFEVEWFTNYSLSEISYFIEGVGDWSMNKPLQAIIDFNPTEIELNFMLAQISLTCASKQMDSQYQETIDNLQKLIADDLHSYYIKEMRLPVYSSRIQKMMKVNNMVLRVMWERKEKLSIARMFNIFNPNFSHPELVKDVF</sequence>
<accession>Q9TXJ1</accession>
<accession>Q9GTF2</accession>
<feature type="chain" id="PRO_0000053790" description="Nuclear hormone receptor family member nhr-59">
    <location>
        <begin position="1"/>
        <end position="416"/>
    </location>
</feature>
<feature type="domain" description="NR LBD" evidence="2">
    <location>
        <begin position="162"/>
        <end position="415"/>
    </location>
</feature>
<feature type="DNA-binding region" description="Nuclear receptor" evidence="1">
    <location>
        <begin position="17"/>
        <end position="94"/>
    </location>
</feature>
<feature type="zinc finger region" description="NR C4-type" evidence="1">
    <location>
        <begin position="20"/>
        <end position="40"/>
    </location>
</feature>
<feature type="zinc finger region" description="NR C4-type" evidence="1">
    <location>
        <begin position="57"/>
        <end position="82"/>
    </location>
</feature>
<name>NHR59_CAEEL</name>
<organism>
    <name type="scientific">Caenorhabditis elegans</name>
    <dbReference type="NCBI Taxonomy" id="6239"/>
    <lineage>
        <taxon>Eukaryota</taxon>
        <taxon>Metazoa</taxon>
        <taxon>Ecdysozoa</taxon>
        <taxon>Nematoda</taxon>
        <taxon>Chromadorea</taxon>
        <taxon>Rhabditida</taxon>
        <taxon>Rhabditina</taxon>
        <taxon>Rhabditomorpha</taxon>
        <taxon>Rhabditoidea</taxon>
        <taxon>Rhabditidae</taxon>
        <taxon>Peloderinae</taxon>
        <taxon>Caenorhabditis</taxon>
    </lineage>
</organism>
<protein>
    <recommendedName>
        <fullName>Nuclear hormone receptor family member nhr-59</fullName>
    </recommendedName>
</protein>
<keyword id="KW-0238">DNA-binding</keyword>
<keyword id="KW-0479">Metal-binding</keyword>
<keyword id="KW-0539">Nucleus</keyword>
<keyword id="KW-0675">Receptor</keyword>
<keyword id="KW-1185">Reference proteome</keyword>
<keyword id="KW-0804">Transcription</keyword>
<keyword id="KW-0805">Transcription regulation</keyword>
<keyword id="KW-0862">Zinc</keyword>
<keyword id="KW-0863">Zinc-finger</keyword>